<comment type="catalytic activity">
    <reaction>
        <text>pyruvate + ATP = phosphoenolpyruvate + ADP + H(+)</text>
        <dbReference type="Rhea" id="RHEA:18157"/>
        <dbReference type="ChEBI" id="CHEBI:15361"/>
        <dbReference type="ChEBI" id="CHEBI:15378"/>
        <dbReference type="ChEBI" id="CHEBI:30616"/>
        <dbReference type="ChEBI" id="CHEBI:58702"/>
        <dbReference type="ChEBI" id="CHEBI:456216"/>
        <dbReference type="EC" id="2.7.1.40"/>
    </reaction>
</comment>
<comment type="cofactor">
    <cofactor evidence="1">
        <name>Mg(2+)</name>
        <dbReference type="ChEBI" id="CHEBI:18420"/>
    </cofactor>
</comment>
<comment type="cofactor">
    <cofactor evidence="1">
        <name>K(+)</name>
        <dbReference type="ChEBI" id="CHEBI:29103"/>
    </cofactor>
</comment>
<comment type="pathway">
    <text>Carbohydrate degradation; glycolysis; pyruvate from D-glyceraldehyde 3-phosphate: step 5/5.</text>
</comment>
<comment type="subunit">
    <text evidence="1">Homotetramer.</text>
</comment>
<comment type="similarity">
    <text evidence="4">Belongs to the pyruvate kinase family.</text>
</comment>
<dbReference type="EC" id="2.7.1.40"/>
<dbReference type="EMBL" id="AY145040">
    <property type="protein sequence ID" value="AAO32602.1"/>
    <property type="molecule type" value="Genomic_DNA"/>
</dbReference>
<dbReference type="EMBL" id="CR382126">
    <property type="protein sequence ID" value="CAG98830.1"/>
    <property type="molecule type" value="Genomic_DNA"/>
</dbReference>
<dbReference type="RefSeq" id="XP_456122.1">
    <property type="nucleotide sequence ID" value="XM_456122.1"/>
</dbReference>
<dbReference type="SMR" id="Q875M9"/>
<dbReference type="FunCoup" id="Q875M9">
    <property type="interactions" value="1025"/>
</dbReference>
<dbReference type="STRING" id="284590.Q875M9"/>
<dbReference type="PaxDb" id="284590-Q875M9"/>
<dbReference type="KEGG" id="kla:KLLA0_F23397g"/>
<dbReference type="eggNOG" id="KOG2323">
    <property type="taxonomic scope" value="Eukaryota"/>
</dbReference>
<dbReference type="HOGENOM" id="CLU_015439_0_1_1"/>
<dbReference type="InParanoid" id="Q875M9"/>
<dbReference type="OMA" id="RVHHIGE"/>
<dbReference type="UniPathway" id="UPA00109">
    <property type="reaction ID" value="UER00188"/>
</dbReference>
<dbReference type="Proteomes" id="UP000000598">
    <property type="component" value="Chromosome F"/>
</dbReference>
<dbReference type="GO" id="GO:0005524">
    <property type="term" value="F:ATP binding"/>
    <property type="evidence" value="ECO:0007669"/>
    <property type="project" value="UniProtKB-KW"/>
</dbReference>
<dbReference type="GO" id="GO:0016301">
    <property type="term" value="F:kinase activity"/>
    <property type="evidence" value="ECO:0007669"/>
    <property type="project" value="UniProtKB-KW"/>
</dbReference>
<dbReference type="GO" id="GO:0000287">
    <property type="term" value="F:magnesium ion binding"/>
    <property type="evidence" value="ECO:0007669"/>
    <property type="project" value="InterPro"/>
</dbReference>
<dbReference type="GO" id="GO:0030955">
    <property type="term" value="F:potassium ion binding"/>
    <property type="evidence" value="ECO:0007669"/>
    <property type="project" value="InterPro"/>
</dbReference>
<dbReference type="GO" id="GO:0004743">
    <property type="term" value="F:pyruvate kinase activity"/>
    <property type="evidence" value="ECO:0007669"/>
    <property type="project" value="UniProtKB-EC"/>
</dbReference>
<dbReference type="CDD" id="cd00288">
    <property type="entry name" value="Pyruvate_Kinase"/>
    <property type="match status" value="1"/>
</dbReference>
<dbReference type="FunFam" id="2.40.33.10:FF:000001">
    <property type="entry name" value="Pyruvate kinase"/>
    <property type="match status" value="1"/>
</dbReference>
<dbReference type="FunFam" id="3.20.20.60:FF:000001">
    <property type="entry name" value="Pyruvate kinase"/>
    <property type="match status" value="1"/>
</dbReference>
<dbReference type="FunFam" id="3.40.1380.20:FF:000001">
    <property type="entry name" value="Pyruvate kinase"/>
    <property type="match status" value="1"/>
</dbReference>
<dbReference type="Gene3D" id="3.20.20.60">
    <property type="entry name" value="Phosphoenolpyruvate-binding domains"/>
    <property type="match status" value="1"/>
</dbReference>
<dbReference type="Gene3D" id="2.40.33.10">
    <property type="entry name" value="PK beta-barrel domain-like"/>
    <property type="match status" value="1"/>
</dbReference>
<dbReference type="Gene3D" id="3.40.1380.20">
    <property type="entry name" value="Pyruvate kinase, C-terminal domain"/>
    <property type="match status" value="1"/>
</dbReference>
<dbReference type="InterPro" id="IPR001697">
    <property type="entry name" value="Pyr_Knase"/>
</dbReference>
<dbReference type="InterPro" id="IPR015813">
    <property type="entry name" value="Pyrv/PenolPyrv_kinase-like_dom"/>
</dbReference>
<dbReference type="InterPro" id="IPR040442">
    <property type="entry name" value="Pyrv_kinase-like_dom_sf"/>
</dbReference>
<dbReference type="InterPro" id="IPR011037">
    <property type="entry name" value="Pyrv_Knase-like_insert_dom_sf"/>
</dbReference>
<dbReference type="InterPro" id="IPR018209">
    <property type="entry name" value="Pyrv_Knase_AS"/>
</dbReference>
<dbReference type="InterPro" id="IPR015793">
    <property type="entry name" value="Pyrv_Knase_brl"/>
</dbReference>
<dbReference type="InterPro" id="IPR015795">
    <property type="entry name" value="Pyrv_Knase_C"/>
</dbReference>
<dbReference type="InterPro" id="IPR036918">
    <property type="entry name" value="Pyrv_Knase_C_sf"/>
</dbReference>
<dbReference type="InterPro" id="IPR015806">
    <property type="entry name" value="Pyrv_Knase_insert_dom_sf"/>
</dbReference>
<dbReference type="NCBIfam" id="NF004491">
    <property type="entry name" value="PRK05826.1"/>
    <property type="match status" value="1"/>
</dbReference>
<dbReference type="NCBIfam" id="NF004978">
    <property type="entry name" value="PRK06354.1"/>
    <property type="match status" value="1"/>
</dbReference>
<dbReference type="NCBIfam" id="TIGR01064">
    <property type="entry name" value="pyruv_kin"/>
    <property type="match status" value="1"/>
</dbReference>
<dbReference type="PANTHER" id="PTHR11817">
    <property type="entry name" value="PYRUVATE KINASE"/>
    <property type="match status" value="1"/>
</dbReference>
<dbReference type="Pfam" id="PF00224">
    <property type="entry name" value="PK"/>
    <property type="match status" value="1"/>
</dbReference>
<dbReference type="Pfam" id="PF02887">
    <property type="entry name" value="PK_C"/>
    <property type="match status" value="1"/>
</dbReference>
<dbReference type="PRINTS" id="PR01050">
    <property type="entry name" value="PYRUVTKNASE"/>
</dbReference>
<dbReference type="SUPFAM" id="SSF51621">
    <property type="entry name" value="Phosphoenolpyruvate/pyruvate domain"/>
    <property type="match status" value="1"/>
</dbReference>
<dbReference type="SUPFAM" id="SSF50800">
    <property type="entry name" value="PK beta-barrel domain-like"/>
    <property type="match status" value="1"/>
</dbReference>
<dbReference type="SUPFAM" id="SSF52935">
    <property type="entry name" value="PK C-terminal domain-like"/>
    <property type="match status" value="1"/>
</dbReference>
<dbReference type="PROSITE" id="PS00110">
    <property type="entry name" value="PYRUVATE_KINASE"/>
    <property type="match status" value="1"/>
</dbReference>
<protein>
    <recommendedName>
        <fullName>Pyruvate kinase</fullName>
        <shortName>PK</shortName>
        <ecNumber>2.7.1.40</ecNumber>
    </recommendedName>
</protein>
<organism>
    <name type="scientific">Kluyveromyces lactis (strain ATCC 8585 / CBS 2359 / DSM 70799 / NBRC 1267 / NRRL Y-1140 / WM37)</name>
    <name type="common">Yeast</name>
    <name type="synonym">Candida sphaerica</name>
    <dbReference type="NCBI Taxonomy" id="284590"/>
    <lineage>
        <taxon>Eukaryota</taxon>
        <taxon>Fungi</taxon>
        <taxon>Dikarya</taxon>
        <taxon>Ascomycota</taxon>
        <taxon>Saccharomycotina</taxon>
        <taxon>Saccharomycetes</taxon>
        <taxon>Saccharomycetales</taxon>
        <taxon>Saccharomycetaceae</taxon>
        <taxon>Kluyveromyces</taxon>
    </lineage>
</organism>
<proteinExistence type="inferred from homology"/>
<name>KPYK_KLULA</name>
<feature type="chain" id="PRO_0000112114" description="Pyruvate kinase">
    <location>
        <begin position="1"/>
        <end position="501"/>
    </location>
</feature>
<feature type="binding site" evidence="1">
    <location>
        <position position="50"/>
    </location>
    <ligand>
        <name>substrate</name>
    </ligand>
</feature>
<feature type="binding site" evidence="2">
    <location>
        <begin position="52"/>
        <end position="55"/>
    </location>
    <ligand>
        <name>ATP</name>
        <dbReference type="ChEBI" id="CHEBI:30616"/>
    </ligand>
</feature>
<feature type="binding site" evidence="1">
    <location>
        <position position="52"/>
    </location>
    <ligand>
        <name>K(+)</name>
        <dbReference type="ChEBI" id="CHEBI:29103"/>
    </ligand>
</feature>
<feature type="binding site" evidence="1">
    <location>
        <position position="54"/>
    </location>
    <ligand>
        <name>K(+)</name>
        <dbReference type="ChEBI" id="CHEBI:29103"/>
    </ligand>
</feature>
<feature type="binding site" evidence="1">
    <location>
        <position position="85"/>
    </location>
    <ligand>
        <name>K(+)</name>
        <dbReference type="ChEBI" id="CHEBI:29103"/>
    </ligand>
</feature>
<feature type="binding site" evidence="1">
    <location>
        <position position="86"/>
    </location>
    <ligand>
        <name>K(+)</name>
        <dbReference type="ChEBI" id="CHEBI:29103"/>
    </ligand>
</feature>
<feature type="binding site" evidence="2">
    <location>
        <position position="92"/>
    </location>
    <ligand>
        <name>ATP</name>
        <dbReference type="ChEBI" id="CHEBI:30616"/>
    </ligand>
</feature>
<feature type="binding site" evidence="2">
    <location>
        <position position="178"/>
    </location>
    <ligand>
        <name>ATP</name>
        <dbReference type="ChEBI" id="CHEBI:30616"/>
    </ligand>
</feature>
<feature type="binding site" evidence="3">
    <location>
        <position position="243"/>
    </location>
    <ligand>
        <name>Mg(2+)</name>
        <dbReference type="ChEBI" id="CHEBI:18420"/>
    </ligand>
</feature>
<feature type="binding site" evidence="1">
    <location>
        <position position="266"/>
    </location>
    <ligand>
        <name>substrate</name>
    </ligand>
</feature>
<feature type="binding site" evidence="1">
    <location>
        <position position="267"/>
    </location>
    <ligand>
        <name>Mg(2+)</name>
        <dbReference type="ChEBI" id="CHEBI:18420"/>
    </ligand>
</feature>
<feature type="binding site" evidence="1">
    <location>
        <position position="267"/>
    </location>
    <ligand>
        <name>substrate</name>
    </ligand>
</feature>
<feature type="binding site" evidence="1">
    <location>
        <position position="299"/>
    </location>
    <ligand>
        <name>substrate</name>
    </ligand>
</feature>
<feature type="site" description="Transition state stabilizer" evidence="1">
    <location>
        <position position="241"/>
    </location>
</feature>
<keyword id="KW-0067">ATP-binding</keyword>
<keyword id="KW-0324">Glycolysis</keyword>
<keyword id="KW-0418">Kinase</keyword>
<keyword id="KW-0460">Magnesium</keyword>
<keyword id="KW-0479">Metal-binding</keyword>
<keyword id="KW-0547">Nucleotide-binding</keyword>
<keyword id="KW-0630">Potassium</keyword>
<keyword id="KW-0670">Pyruvate</keyword>
<keyword id="KW-1185">Reference proteome</keyword>
<keyword id="KW-0808">Transferase</keyword>
<accession>Q875M9</accession>
<accession>Q6CIW7</accession>
<sequence length="501" mass="54917">MESRLGWLTDLSTETGTNLRRTSIICTIGPKTNNPETLVELRKAGMNIVRMNFSHGSYEYHQSVIDNARKSEELYQGRPLAIALDTKGPEIRTGTTTNDVDYPIPPNHEMIFTTDDKYAKACDDKTMYVDYKNITKVIEAGRIIYVDDGVLSFEVLEVIDDNTLKVKSLNAGKICSHKGVNLPGTDVDLPALSEKDKSDLKFGVKNGVHMVFASFIRTAQDVLTIREVLGEQGKDIKIIVKIENQQGVNNFDDILKVTDGVMVARGDLGIEIPAPQVFAVQKKLIAKCNLAGKPVICATQMLESMTYNPRPTRAEVSDVGNAVLDGADCVMLSGETAKGNYPINAVKTMAETALIAEQAIPYIPTYDDLRNLTPKPTSTTETIAAASVSAVFEQKARALIVLSTTGDTPRLVAKYKPNVPIVMVTRNPRAARFSHLYRGVFPFVYDESSDSEWTVDVEKRINFGVKKAKEFGILVDGDTIVTIQGFAAGVGNSNTLRVLTV</sequence>
<evidence type="ECO:0000250" key="1"/>
<evidence type="ECO:0000250" key="2">
    <source>
        <dbReference type="UniProtKB" id="P14618"/>
    </source>
</evidence>
<evidence type="ECO:0000255" key="3"/>
<evidence type="ECO:0000305" key="4"/>
<gene>
    <name type="primary">PYK1</name>
    <name type="synonym">CDC19</name>
    <name type="ordered locus">KLLA0F23397g</name>
</gene>
<reference key="1">
    <citation type="journal article" date="2003" name="Nature">
        <title>Yeast genome duplication was followed by asynchronous differentiation of duplicated genes.</title>
        <authorList>
            <person name="Langkjaer R.B."/>
            <person name="Cliften P.F."/>
            <person name="Johnston M."/>
            <person name="Piskur J."/>
        </authorList>
    </citation>
    <scope>NUCLEOTIDE SEQUENCE [GENOMIC DNA]</scope>
    <source>
        <strain>ATCC 76492 / CBS 2359/152 / CLIB 210</strain>
    </source>
</reference>
<reference key="2">
    <citation type="journal article" date="2004" name="Nature">
        <title>Genome evolution in yeasts.</title>
        <authorList>
            <person name="Dujon B."/>
            <person name="Sherman D."/>
            <person name="Fischer G."/>
            <person name="Durrens P."/>
            <person name="Casaregola S."/>
            <person name="Lafontaine I."/>
            <person name="de Montigny J."/>
            <person name="Marck C."/>
            <person name="Neuveglise C."/>
            <person name="Talla E."/>
            <person name="Goffard N."/>
            <person name="Frangeul L."/>
            <person name="Aigle M."/>
            <person name="Anthouard V."/>
            <person name="Babour A."/>
            <person name="Barbe V."/>
            <person name="Barnay S."/>
            <person name="Blanchin S."/>
            <person name="Beckerich J.-M."/>
            <person name="Beyne E."/>
            <person name="Bleykasten C."/>
            <person name="Boisrame A."/>
            <person name="Boyer J."/>
            <person name="Cattolico L."/>
            <person name="Confanioleri F."/>
            <person name="de Daruvar A."/>
            <person name="Despons L."/>
            <person name="Fabre E."/>
            <person name="Fairhead C."/>
            <person name="Ferry-Dumazet H."/>
            <person name="Groppi A."/>
            <person name="Hantraye F."/>
            <person name="Hennequin C."/>
            <person name="Jauniaux N."/>
            <person name="Joyet P."/>
            <person name="Kachouri R."/>
            <person name="Kerrest A."/>
            <person name="Koszul R."/>
            <person name="Lemaire M."/>
            <person name="Lesur I."/>
            <person name="Ma L."/>
            <person name="Muller H."/>
            <person name="Nicaud J.-M."/>
            <person name="Nikolski M."/>
            <person name="Oztas S."/>
            <person name="Ozier-Kalogeropoulos O."/>
            <person name="Pellenz S."/>
            <person name="Potier S."/>
            <person name="Richard G.-F."/>
            <person name="Straub M.-L."/>
            <person name="Suleau A."/>
            <person name="Swennen D."/>
            <person name="Tekaia F."/>
            <person name="Wesolowski-Louvel M."/>
            <person name="Westhof E."/>
            <person name="Wirth B."/>
            <person name="Zeniou-Meyer M."/>
            <person name="Zivanovic Y."/>
            <person name="Bolotin-Fukuhara M."/>
            <person name="Thierry A."/>
            <person name="Bouchier C."/>
            <person name="Caudron B."/>
            <person name="Scarpelli C."/>
            <person name="Gaillardin C."/>
            <person name="Weissenbach J."/>
            <person name="Wincker P."/>
            <person name="Souciet J.-L."/>
        </authorList>
    </citation>
    <scope>NUCLEOTIDE SEQUENCE [LARGE SCALE GENOMIC DNA]</scope>
    <source>
        <strain>ATCC 8585 / CBS 2359 / DSM 70799 / NBRC 1267 / NRRL Y-1140 / WM37</strain>
    </source>
</reference>